<sequence>MAPFPDEVDVFTGPHWRMKQLVGLYSEKLSNTNFSNNRDFRSFLQSLLDTFTEFKKHEQIENECIMELLQERSHTVYHVHADNKLSDMLTLFQKGLRSVTSEFEQLNYAQQLKERLEAFTQDFIPHMKEEEEVYQPMLMEYFSYEELKAIKQQVMLQHCSSQCQSSCSDTHTLLKGLSLWSHAELQKAFKYSDHEKTGDERVLERVSVSSLPQELLLRIFRFLGPQDLCRCAQVCSVWTQVTRTGSLWRHLYPVRWARGEYYSGPPGDLDLEPDDDWIKSLQDDGRAYQEWDEDADVDESEEASAERSSISALQREKLLLNGIIQKLLPAVGSSVRSLSLAYSSTLSSKMVRQMLSLCPNLTHLDLTQTDVSDSAFDSWCALGACGTLQHLDLSGCDKITDRTLKILSVGLGDSSTPSPAHKLLQAPPSPIRIEEPRLQPMGRSCQDLIFKRRPGGRGSGCGPTHIWVLDPVKLADIEDAADWSRRGGVASQEIGCGGISEALSASCCCRRSQRRGFRTGLSSSPWQYGDALCGHSSCCSSDAAAIRTQSDLQATGGSAELRTKCWFEGQSCAEHHNRTDQSGAQRALRFLSLSGCHQITDLGLRCVCLRGGLPLLEHLNLSGCPLITGAGLQEVVSASPALNIEHFYYCDNINGPHADTASGCQNLQCGFRVCCRSGE</sequence>
<name>FBXL5_DANRE</name>
<protein>
    <recommendedName>
        <fullName>F-box/LRR-repeat protein 5</fullName>
    </recommendedName>
    <alternativeName>
        <fullName>F-box and leucine-rich repeat protein 5</fullName>
    </alternativeName>
</protein>
<keyword id="KW-0963">Cytoplasm</keyword>
<keyword id="KW-0408">Iron</keyword>
<keyword id="KW-0411">Iron-sulfur</keyword>
<keyword id="KW-0433">Leucine-rich repeat</keyword>
<keyword id="KW-0479">Metal-binding</keyword>
<keyword id="KW-0539">Nucleus</keyword>
<keyword id="KW-1185">Reference proteome</keyword>
<keyword id="KW-0677">Repeat</keyword>
<keyword id="KW-0832">Ubl conjugation</keyword>
<keyword id="KW-0833">Ubl conjugation pathway</keyword>
<gene>
    <name type="primary">fbxl5</name>
</gene>
<accession>Q2YDQ5</accession>
<organism>
    <name type="scientific">Danio rerio</name>
    <name type="common">Zebrafish</name>
    <name type="synonym">Brachydanio rerio</name>
    <dbReference type="NCBI Taxonomy" id="7955"/>
    <lineage>
        <taxon>Eukaryota</taxon>
        <taxon>Metazoa</taxon>
        <taxon>Chordata</taxon>
        <taxon>Craniata</taxon>
        <taxon>Vertebrata</taxon>
        <taxon>Euteleostomi</taxon>
        <taxon>Actinopterygii</taxon>
        <taxon>Neopterygii</taxon>
        <taxon>Teleostei</taxon>
        <taxon>Ostariophysi</taxon>
        <taxon>Cypriniformes</taxon>
        <taxon>Danionidae</taxon>
        <taxon>Danioninae</taxon>
        <taxon>Danio</taxon>
    </lineage>
</organism>
<reference key="1">
    <citation type="submission" date="2005-11" db="EMBL/GenBank/DDBJ databases">
        <authorList>
            <consortium name="NIH - Zebrafish Gene Collection (ZGC) project"/>
        </authorList>
    </citation>
    <scope>NUCLEOTIDE SEQUENCE [LARGE SCALE MRNA]</scope>
    <source>
        <tissue>Embryo</tissue>
    </source>
</reference>
<comment type="function">
    <text evidence="1">Component of some SCF (SKP1-cullin-F-box) protein ligase complex that plays a central role in iron homeostasis by promoting the ubiquitination and subsequent degradation of ireb2/irp2. Upon high iron and oxygen level, it specifically recognizes and binds ireb2/irp2, promoting its ubiquitination and degradation by the proteasome (By similarity).</text>
</comment>
<comment type="cofactor">
    <cofactor evidence="1">
        <name>[2Fe-2S] cluster</name>
        <dbReference type="ChEBI" id="CHEBI:190135"/>
    </cofactor>
</comment>
<comment type="pathway">
    <text>Protein modification; protein ubiquitination.</text>
</comment>
<comment type="subunit">
    <text evidence="1">Part of a SCF (SKP1-cullin-F-box) protein ligase complex.</text>
</comment>
<comment type="subcellular location">
    <subcellularLocation>
        <location evidence="1">Cytoplasm</location>
        <location evidence="1">Perinuclear region</location>
    </subcellularLocation>
    <subcellularLocation>
        <location evidence="1">Nucleus</location>
    </subcellularLocation>
</comment>
<comment type="domain">
    <text evidence="1">The hemerythrin-like region acts as an oxygen and iron sensor by binding oxygen through a diiron metal-center. In absence of oxygen and iron, the protein is ubiquitinated and degraded (By similarity).</text>
</comment>
<comment type="PTM">
    <text evidence="1">Ubiquitinated upon iron and oxygen depletion, leading to its degradation by the proteasome. Ubiquitination is regulated by the hemerythrin-like region that acts as an oxygen and iron sensor (By similarity).</text>
</comment>
<comment type="sequence caution" evidence="3">
    <conflict type="frameshift">
        <sequence resource="EMBL-CDS" id="AAI10115"/>
    </conflict>
</comment>
<evidence type="ECO:0000250" key="1">
    <source>
        <dbReference type="UniProtKB" id="Q9UKA1"/>
    </source>
</evidence>
<evidence type="ECO:0000255" key="2">
    <source>
        <dbReference type="PROSITE-ProRule" id="PRU00080"/>
    </source>
</evidence>
<evidence type="ECO:0000305" key="3"/>
<proteinExistence type="evidence at transcript level"/>
<dbReference type="EMBL" id="BC110114">
    <property type="protein sequence ID" value="AAI10115.1"/>
    <property type="status" value="ALT_FRAME"/>
    <property type="molecule type" value="mRNA"/>
</dbReference>
<dbReference type="SMR" id="Q2YDQ5"/>
<dbReference type="FunCoup" id="Q2YDQ5">
    <property type="interactions" value="1543"/>
</dbReference>
<dbReference type="STRING" id="7955.ENSDARP00000106526"/>
<dbReference type="PaxDb" id="7955-ENSDARP00000106526"/>
<dbReference type="AGR" id="ZFIN:ZDB-GENE-030131-900"/>
<dbReference type="ZFIN" id="ZDB-GENE-030131-900">
    <property type="gene designation" value="fbxl5"/>
</dbReference>
<dbReference type="eggNOG" id="ENOG502QS5I">
    <property type="taxonomic scope" value="Eukaryota"/>
</dbReference>
<dbReference type="InParanoid" id="Q2YDQ5"/>
<dbReference type="PhylomeDB" id="Q2YDQ5"/>
<dbReference type="Reactome" id="R-DRE-8951664">
    <property type="pathway name" value="Neddylation"/>
</dbReference>
<dbReference type="Reactome" id="R-DRE-917937">
    <property type="pathway name" value="Iron uptake and transport"/>
</dbReference>
<dbReference type="Reactome" id="R-DRE-983168">
    <property type="pathway name" value="Antigen processing: Ubiquitination &amp; Proteasome degradation"/>
</dbReference>
<dbReference type="UniPathway" id="UPA00143"/>
<dbReference type="PRO" id="PR:Q2YDQ5"/>
<dbReference type="Proteomes" id="UP000000437">
    <property type="component" value="Unplaced"/>
</dbReference>
<dbReference type="GO" id="GO:0005634">
    <property type="term" value="C:nucleus"/>
    <property type="evidence" value="ECO:0007669"/>
    <property type="project" value="UniProtKB-SubCell"/>
</dbReference>
<dbReference type="GO" id="GO:0048471">
    <property type="term" value="C:perinuclear region of cytoplasm"/>
    <property type="evidence" value="ECO:0000250"/>
    <property type="project" value="UniProtKB"/>
</dbReference>
<dbReference type="GO" id="GO:0019005">
    <property type="term" value="C:SCF ubiquitin ligase complex"/>
    <property type="evidence" value="ECO:0000250"/>
    <property type="project" value="UniProtKB"/>
</dbReference>
<dbReference type="GO" id="GO:0005506">
    <property type="term" value="F:iron ion binding"/>
    <property type="evidence" value="ECO:0000250"/>
    <property type="project" value="UniProtKB"/>
</dbReference>
<dbReference type="GO" id="GO:0051536">
    <property type="term" value="F:iron-sulfur cluster binding"/>
    <property type="evidence" value="ECO:0007669"/>
    <property type="project" value="UniProtKB-KW"/>
</dbReference>
<dbReference type="GO" id="GO:0006879">
    <property type="term" value="P:intracellular iron ion homeostasis"/>
    <property type="evidence" value="ECO:0000250"/>
    <property type="project" value="UniProtKB"/>
</dbReference>
<dbReference type="GO" id="GO:0016567">
    <property type="term" value="P:protein ubiquitination"/>
    <property type="evidence" value="ECO:0000250"/>
    <property type="project" value="UniProtKB"/>
</dbReference>
<dbReference type="GO" id="GO:0031146">
    <property type="term" value="P:SCF-dependent proteasomal ubiquitin-dependent protein catabolic process"/>
    <property type="evidence" value="ECO:0000250"/>
    <property type="project" value="UniProtKB"/>
</dbReference>
<dbReference type="CDD" id="cd22118">
    <property type="entry name" value="F-box_FBXL5"/>
    <property type="match status" value="1"/>
</dbReference>
<dbReference type="CDD" id="cd12109">
    <property type="entry name" value="Hr_FBXL5"/>
    <property type="match status" value="1"/>
</dbReference>
<dbReference type="FunFam" id="3.80.10.10:FF:001352">
    <property type="entry name" value="F-box/LRR-repeat protein 5"/>
    <property type="match status" value="1"/>
</dbReference>
<dbReference type="FunFam" id="1.20.1280.50:FF:000007">
    <property type="entry name" value="F-box/LRR-repeat protein 5 isoform X1"/>
    <property type="match status" value="1"/>
</dbReference>
<dbReference type="FunFam" id="1.20.120.520:FF:000002">
    <property type="entry name" value="F-box/LRR-repeat protein 5 isoform X2"/>
    <property type="match status" value="1"/>
</dbReference>
<dbReference type="Gene3D" id="1.20.1280.50">
    <property type="match status" value="1"/>
</dbReference>
<dbReference type="Gene3D" id="1.20.120.520">
    <property type="entry name" value="nmb1532 protein domain like"/>
    <property type="match status" value="1"/>
</dbReference>
<dbReference type="Gene3D" id="3.80.10.10">
    <property type="entry name" value="Ribonuclease Inhibitor"/>
    <property type="match status" value="2"/>
</dbReference>
<dbReference type="InterPro" id="IPR036047">
    <property type="entry name" value="F-box-like_dom_sf"/>
</dbReference>
<dbReference type="InterPro" id="IPR001810">
    <property type="entry name" value="F-box_dom"/>
</dbReference>
<dbReference type="InterPro" id="IPR012312">
    <property type="entry name" value="Hemerythrin-like"/>
</dbReference>
<dbReference type="InterPro" id="IPR045808">
    <property type="entry name" value="Hr_FBXL5"/>
</dbReference>
<dbReference type="InterPro" id="IPR001611">
    <property type="entry name" value="Leu-rich_rpt"/>
</dbReference>
<dbReference type="InterPro" id="IPR006553">
    <property type="entry name" value="Leu-rich_rpt_Cys-con_subtyp"/>
</dbReference>
<dbReference type="InterPro" id="IPR032675">
    <property type="entry name" value="LRR_dom_sf"/>
</dbReference>
<dbReference type="PANTHER" id="PTHR13318:SF19">
    <property type="entry name" value="F-BOX_LRR-REPEAT PROTEIN 5"/>
    <property type="match status" value="1"/>
</dbReference>
<dbReference type="PANTHER" id="PTHR13318">
    <property type="entry name" value="PARTNER OF PAIRED, ISOFORM B-RELATED"/>
    <property type="match status" value="1"/>
</dbReference>
<dbReference type="Pfam" id="PF12937">
    <property type="entry name" value="F-box-like"/>
    <property type="match status" value="1"/>
</dbReference>
<dbReference type="Pfam" id="PF01814">
    <property type="entry name" value="Hemerythrin"/>
    <property type="match status" value="1"/>
</dbReference>
<dbReference type="Pfam" id="PF13516">
    <property type="entry name" value="LRR_6"/>
    <property type="match status" value="4"/>
</dbReference>
<dbReference type="SMART" id="SM00256">
    <property type="entry name" value="FBOX"/>
    <property type="match status" value="1"/>
</dbReference>
<dbReference type="SMART" id="SM00367">
    <property type="entry name" value="LRR_CC"/>
    <property type="match status" value="4"/>
</dbReference>
<dbReference type="SUPFAM" id="SSF81383">
    <property type="entry name" value="F-box domain"/>
    <property type="match status" value="1"/>
</dbReference>
<dbReference type="SUPFAM" id="SSF52047">
    <property type="entry name" value="RNI-like"/>
    <property type="match status" value="1"/>
</dbReference>
<dbReference type="PROSITE" id="PS50181">
    <property type="entry name" value="FBOX"/>
    <property type="match status" value="1"/>
</dbReference>
<feature type="chain" id="PRO_0000390466" description="F-box/LRR-repeat protein 5">
    <location>
        <begin position="1"/>
        <end position="679"/>
    </location>
</feature>
<feature type="domain" description="F-box" evidence="2">
    <location>
        <begin position="205"/>
        <end position="251"/>
    </location>
</feature>
<feature type="repeat" description="LRR 1">
    <location>
        <begin position="316"/>
        <end position="342"/>
    </location>
</feature>
<feature type="repeat" description="LRR 2">
    <location>
        <begin position="343"/>
        <end position="367"/>
    </location>
</feature>
<feature type="repeat" description="LRR 3">
    <location>
        <begin position="368"/>
        <end position="395"/>
    </location>
</feature>
<feature type="repeat" description="LRR 4">
    <location>
        <begin position="396"/>
        <end position="426"/>
    </location>
</feature>
<feature type="repeat" description="LRR 5">
    <location>
        <begin position="565"/>
        <end position="595"/>
    </location>
</feature>
<feature type="repeat" description="LRR 6">
    <location>
        <begin position="596"/>
        <end position="623"/>
    </location>
</feature>
<feature type="repeat" description="LRR 7">
    <location>
        <begin position="624"/>
        <end position="649"/>
    </location>
</feature>
<feature type="region of interest" description="Hemerythrin-like" evidence="1">
    <location>
        <begin position="1"/>
        <end position="159"/>
    </location>
</feature>
<feature type="binding site" evidence="1">
    <location>
        <position position="15"/>
    </location>
    <ligand>
        <name>Fe(3+)</name>
        <dbReference type="ChEBI" id="CHEBI:29034"/>
        <label>1</label>
    </ligand>
</feature>
<feature type="binding site" evidence="1">
    <location>
        <position position="57"/>
    </location>
    <ligand>
        <name>Fe(3+)</name>
        <dbReference type="ChEBI" id="CHEBI:29034"/>
        <label>1</label>
    </ligand>
</feature>
<feature type="binding site" evidence="1">
    <location>
        <position position="58"/>
    </location>
    <ligand>
        <name>Fe(3+)</name>
        <dbReference type="ChEBI" id="CHEBI:29034"/>
        <label>2</label>
    </ligand>
</feature>
<feature type="binding site" evidence="1">
    <location>
        <position position="61"/>
    </location>
    <ligand>
        <name>Fe(3+)</name>
        <dbReference type="ChEBI" id="CHEBI:29034"/>
        <label>1</label>
    </ligand>
</feature>
<feature type="binding site" evidence="1">
    <location>
        <position position="61"/>
    </location>
    <ligand>
        <name>Fe(3+)</name>
        <dbReference type="ChEBI" id="CHEBI:29034"/>
        <label>2</label>
    </ligand>
</feature>
<feature type="binding site" evidence="1">
    <location>
        <position position="80"/>
    </location>
    <ligand>
        <name>Fe(3+)</name>
        <dbReference type="ChEBI" id="CHEBI:29034"/>
        <label>2</label>
    </ligand>
</feature>
<feature type="binding site" evidence="1">
    <location>
        <position position="126"/>
    </location>
    <ligand>
        <name>Fe(3+)</name>
        <dbReference type="ChEBI" id="CHEBI:29034"/>
        <label>2</label>
    </ligand>
</feature>
<feature type="binding site" evidence="1">
    <location>
        <position position="130"/>
    </location>
    <ligand>
        <name>Fe(3+)</name>
        <dbReference type="ChEBI" id="CHEBI:29034"/>
        <label>1</label>
    </ligand>
</feature>
<feature type="binding site" evidence="1">
    <location>
        <position position="130"/>
    </location>
    <ligand>
        <name>Fe(3+)</name>
        <dbReference type="ChEBI" id="CHEBI:29034"/>
        <label>2</label>
    </ligand>
</feature>
<feature type="binding site" evidence="1">
    <location>
        <position position="650"/>
    </location>
    <ligand>
        <name>[2Fe-2S] cluster</name>
        <dbReference type="ChEBI" id="CHEBI:190135"/>
    </ligand>
</feature>
<feature type="binding site" evidence="1">
    <location>
        <position position="664"/>
    </location>
    <ligand>
        <name>[2Fe-2S] cluster</name>
        <dbReference type="ChEBI" id="CHEBI:190135"/>
    </ligand>
</feature>
<feature type="binding site" evidence="1">
    <location>
        <position position="674"/>
    </location>
    <ligand>
        <name>[2Fe-2S] cluster</name>
        <dbReference type="ChEBI" id="CHEBI:190135"/>
    </ligand>
</feature>
<feature type="binding site" evidence="1">
    <location>
        <position position="675"/>
    </location>
    <ligand>
        <name>[2Fe-2S] cluster</name>
        <dbReference type="ChEBI" id="CHEBI:190135"/>
    </ligand>
</feature>